<name>HLDE_MAGMM</name>
<protein>
    <recommendedName>
        <fullName evidence="1">Bifunctional protein HldE</fullName>
    </recommendedName>
    <domain>
        <recommendedName>
            <fullName evidence="1">D-beta-D-heptose 7-phosphate kinase</fullName>
            <ecNumber evidence="1">2.7.1.167</ecNumber>
        </recommendedName>
        <alternativeName>
            <fullName evidence="1">D-beta-D-heptose 7-phosphotransferase</fullName>
        </alternativeName>
        <alternativeName>
            <fullName evidence="1">D-glycero-beta-D-manno-heptose-7-phosphate kinase</fullName>
        </alternativeName>
    </domain>
    <domain>
        <recommendedName>
            <fullName evidence="1">D-beta-D-heptose 1-phosphate adenylyltransferase</fullName>
            <ecNumber evidence="1">2.7.7.70</ecNumber>
        </recommendedName>
        <alternativeName>
            <fullName evidence="1">D-glycero-beta-D-manno-heptose 1-phosphate adenylyltransferase</fullName>
        </alternativeName>
    </domain>
</protein>
<dbReference type="EC" id="2.7.1.167" evidence="1"/>
<dbReference type="EC" id="2.7.7.70" evidence="1"/>
<dbReference type="EMBL" id="CP000471">
    <property type="protein sequence ID" value="ABK44063.1"/>
    <property type="status" value="ALT_INIT"/>
    <property type="molecule type" value="Genomic_DNA"/>
</dbReference>
<dbReference type="RefSeq" id="WP_011713213.1">
    <property type="nucleotide sequence ID" value="NC_008576.1"/>
</dbReference>
<dbReference type="SMR" id="A0L7X0"/>
<dbReference type="STRING" id="156889.Mmc1_1554"/>
<dbReference type="KEGG" id="mgm:Mmc1_1554"/>
<dbReference type="eggNOG" id="COG0615">
    <property type="taxonomic scope" value="Bacteria"/>
</dbReference>
<dbReference type="eggNOG" id="COG2870">
    <property type="taxonomic scope" value="Bacteria"/>
</dbReference>
<dbReference type="HOGENOM" id="CLU_021150_2_1_5"/>
<dbReference type="OrthoDB" id="9802794at2"/>
<dbReference type="UniPathway" id="UPA00356">
    <property type="reaction ID" value="UER00437"/>
</dbReference>
<dbReference type="UniPathway" id="UPA00356">
    <property type="reaction ID" value="UER00439"/>
</dbReference>
<dbReference type="Proteomes" id="UP000002586">
    <property type="component" value="Chromosome"/>
</dbReference>
<dbReference type="GO" id="GO:0005829">
    <property type="term" value="C:cytosol"/>
    <property type="evidence" value="ECO:0007669"/>
    <property type="project" value="TreeGrafter"/>
</dbReference>
<dbReference type="GO" id="GO:0005524">
    <property type="term" value="F:ATP binding"/>
    <property type="evidence" value="ECO:0007669"/>
    <property type="project" value="UniProtKB-UniRule"/>
</dbReference>
<dbReference type="GO" id="GO:0033785">
    <property type="term" value="F:heptose 7-phosphate kinase activity"/>
    <property type="evidence" value="ECO:0007669"/>
    <property type="project" value="UniProtKB-UniRule"/>
</dbReference>
<dbReference type="GO" id="GO:0033786">
    <property type="term" value="F:heptose-1-phosphate adenylyltransferase activity"/>
    <property type="evidence" value="ECO:0007669"/>
    <property type="project" value="UniProtKB-UniRule"/>
</dbReference>
<dbReference type="GO" id="GO:0016773">
    <property type="term" value="F:phosphotransferase activity, alcohol group as acceptor"/>
    <property type="evidence" value="ECO:0007669"/>
    <property type="project" value="InterPro"/>
</dbReference>
<dbReference type="GO" id="GO:0097171">
    <property type="term" value="P:ADP-L-glycero-beta-D-manno-heptose biosynthetic process"/>
    <property type="evidence" value="ECO:0007669"/>
    <property type="project" value="UniProtKB-UniPathway"/>
</dbReference>
<dbReference type="CDD" id="cd01172">
    <property type="entry name" value="RfaE_like"/>
    <property type="match status" value="1"/>
</dbReference>
<dbReference type="FunFam" id="3.40.1190.20:FF:000002">
    <property type="entry name" value="Bifunctional protein HldE"/>
    <property type="match status" value="1"/>
</dbReference>
<dbReference type="Gene3D" id="3.40.1190.20">
    <property type="match status" value="1"/>
</dbReference>
<dbReference type="Gene3D" id="3.40.50.620">
    <property type="entry name" value="HUPs"/>
    <property type="match status" value="1"/>
</dbReference>
<dbReference type="HAMAP" id="MF_01603">
    <property type="entry name" value="HldE"/>
    <property type="match status" value="1"/>
</dbReference>
<dbReference type="InterPro" id="IPR023030">
    <property type="entry name" value="Bifunc_HldE"/>
</dbReference>
<dbReference type="InterPro" id="IPR002173">
    <property type="entry name" value="Carboh/pur_kinase_PfkB_CS"/>
</dbReference>
<dbReference type="InterPro" id="IPR004821">
    <property type="entry name" value="Cyt_trans-like"/>
</dbReference>
<dbReference type="InterPro" id="IPR011611">
    <property type="entry name" value="PfkB_dom"/>
</dbReference>
<dbReference type="InterPro" id="IPR011913">
    <property type="entry name" value="RfaE_dom_I"/>
</dbReference>
<dbReference type="InterPro" id="IPR011914">
    <property type="entry name" value="RfaE_dom_II"/>
</dbReference>
<dbReference type="InterPro" id="IPR029056">
    <property type="entry name" value="Ribokinase-like"/>
</dbReference>
<dbReference type="InterPro" id="IPR014729">
    <property type="entry name" value="Rossmann-like_a/b/a_fold"/>
</dbReference>
<dbReference type="NCBIfam" id="TIGR00125">
    <property type="entry name" value="cyt_tran_rel"/>
    <property type="match status" value="1"/>
</dbReference>
<dbReference type="NCBIfam" id="NF008454">
    <property type="entry name" value="PRK11316.1"/>
    <property type="match status" value="1"/>
</dbReference>
<dbReference type="NCBIfam" id="TIGR02198">
    <property type="entry name" value="rfaE_dom_I"/>
    <property type="match status" value="1"/>
</dbReference>
<dbReference type="NCBIfam" id="TIGR02199">
    <property type="entry name" value="rfaE_dom_II"/>
    <property type="match status" value="1"/>
</dbReference>
<dbReference type="PANTHER" id="PTHR46969">
    <property type="entry name" value="BIFUNCTIONAL PROTEIN HLDE"/>
    <property type="match status" value="1"/>
</dbReference>
<dbReference type="PANTHER" id="PTHR46969:SF1">
    <property type="entry name" value="BIFUNCTIONAL PROTEIN HLDE"/>
    <property type="match status" value="1"/>
</dbReference>
<dbReference type="Pfam" id="PF01467">
    <property type="entry name" value="CTP_transf_like"/>
    <property type="match status" value="1"/>
</dbReference>
<dbReference type="Pfam" id="PF00294">
    <property type="entry name" value="PfkB"/>
    <property type="match status" value="1"/>
</dbReference>
<dbReference type="SUPFAM" id="SSF52374">
    <property type="entry name" value="Nucleotidylyl transferase"/>
    <property type="match status" value="1"/>
</dbReference>
<dbReference type="SUPFAM" id="SSF53613">
    <property type="entry name" value="Ribokinase-like"/>
    <property type="match status" value="1"/>
</dbReference>
<dbReference type="PROSITE" id="PS00583">
    <property type="entry name" value="PFKB_KINASES_1"/>
    <property type="match status" value="1"/>
</dbReference>
<comment type="function">
    <text evidence="1">Catalyzes the phosphorylation of D-glycero-D-manno-heptose 7-phosphate at the C-1 position to selectively form D-glycero-beta-D-manno-heptose-1,7-bisphosphate.</text>
</comment>
<comment type="function">
    <text evidence="1">Catalyzes the ADP transfer from ATP to D-glycero-beta-D-manno-heptose 1-phosphate, yielding ADP-D-glycero-beta-D-manno-heptose.</text>
</comment>
<comment type="catalytic activity">
    <reaction evidence="1">
        <text>D-glycero-beta-D-manno-heptose 7-phosphate + ATP = D-glycero-beta-D-manno-heptose 1,7-bisphosphate + ADP + H(+)</text>
        <dbReference type="Rhea" id="RHEA:27473"/>
        <dbReference type="ChEBI" id="CHEBI:15378"/>
        <dbReference type="ChEBI" id="CHEBI:30616"/>
        <dbReference type="ChEBI" id="CHEBI:60204"/>
        <dbReference type="ChEBI" id="CHEBI:60208"/>
        <dbReference type="ChEBI" id="CHEBI:456216"/>
        <dbReference type="EC" id="2.7.1.167"/>
    </reaction>
</comment>
<comment type="catalytic activity">
    <reaction evidence="1">
        <text>D-glycero-beta-D-manno-heptose 1-phosphate + ATP + H(+) = ADP-D-glycero-beta-D-manno-heptose + diphosphate</text>
        <dbReference type="Rhea" id="RHEA:27465"/>
        <dbReference type="ChEBI" id="CHEBI:15378"/>
        <dbReference type="ChEBI" id="CHEBI:30616"/>
        <dbReference type="ChEBI" id="CHEBI:33019"/>
        <dbReference type="ChEBI" id="CHEBI:59967"/>
        <dbReference type="ChEBI" id="CHEBI:61593"/>
        <dbReference type="EC" id="2.7.7.70"/>
    </reaction>
</comment>
<comment type="pathway">
    <text evidence="1">Nucleotide-sugar biosynthesis; ADP-L-glycero-beta-D-manno-heptose biosynthesis; ADP-L-glycero-beta-D-manno-heptose from D-glycero-beta-D-manno-heptose 7-phosphate: step 1/4.</text>
</comment>
<comment type="pathway">
    <text evidence="1">Nucleotide-sugar biosynthesis; ADP-L-glycero-beta-D-manno-heptose biosynthesis; ADP-L-glycero-beta-D-manno-heptose from D-glycero-beta-D-manno-heptose 7-phosphate: step 3/4.</text>
</comment>
<comment type="subunit">
    <text evidence="1">Homodimer.</text>
</comment>
<comment type="similarity">
    <text evidence="1">In the N-terminal section; belongs to the carbohydrate kinase PfkB family.</text>
</comment>
<comment type="similarity">
    <text evidence="1">In the C-terminal section; belongs to the cytidylyltransferase family.</text>
</comment>
<comment type="sequence caution" evidence="2">
    <conflict type="erroneous initiation">
        <sequence resource="EMBL-CDS" id="ABK44063"/>
    </conflict>
</comment>
<keyword id="KW-0067">ATP-binding</keyword>
<keyword id="KW-0119">Carbohydrate metabolism</keyword>
<keyword id="KW-0418">Kinase</keyword>
<keyword id="KW-0511">Multifunctional enzyme</keyword>
<keyword id="KW-0547">Nucleotide-binding</keyword>
<keyword id="KW-0548">Nucleotidyltransferase</keyword>
<keyword id="KW-1185">Reference proteome</keyword>
<keyword id="KW-0808">Transferase</keyword>
<reference key="1">
    <citation type="journal article" date="2009" name="Appl. Environ. Microbiol.">
        <title>Complete genome sequence of the chemolithoautotrophic marine magnetotactic coccus strain MC-1.</title>
        <authorList>
            <person name="Schubbe S."/>
            <person name="Williams T.J."/>
            <person name="Xie G."/>
            <person name="Kiss H.E."/>
            <person name="Brettin T.S."/>
            <person name="Martinez D."/>
            <person name="Ross C.A."/>
            <person name="Schuler D."/>
            <person name="Cox B.L."/>
            <person name="Nealson K.H."/>
            <person name="Bazylinski D.A."/>
        </authorList>
    </citation>
    <scope>NUCLEOTIDE SEQUENCE [LARGE SCALE GENOMIC DNA]</scope>
    <source>
        <strain>ATCC BAA-1437 / JCM 17883 / MC-1</strain>
    </source>
</reference>
<feature type="chain" id="PRO_0000291678" description="Bifunctional protein HldE">
    <location>
        <begin position="1"/>
        <end position="487"/>
    </location>
</feature>
<feature type="region of interest" description="Ribokinase">
    <location>
        <begin position="1"/>
        <end position="329"/>
    </location>
</feature>
<feature type="region of interest" description="Cytidylyltransferase">
    <location>
        <begin position="356"/>
        <end position="487"/>
    </location>
</feature>
<feature type="active site" evidence="1">
    <location>
        <position position="274"/>
    </location>
</feature>
<feature type="binding site" evidence="1">
    <location>
        <begin position="204"/>
        <end position="207"/>
    </location>
    <ligand>
        <name>ATP</name>
        <dbReference type="ChEBI" id="CHEBI:30616"/>
    </ligand>
</feature>
<organism>
    <name type="scientific">Magnetococcus marinus (strain ATCC BAA-1437 / JCM 17883 / MC-1)</name>
    <dbReference type="NCBI Taxonomy" id="156889"/>
    <lineage>
        <taxon>Bacteria</taxon>
        <taxon>Pseudomonadati</taxon>
        <taxon>Pseudomonadota</taxon>
        <taxon>Alphaproteobacteria</taxon>
        <taxon>Magnetococcales</taxon>
        <taxon>Magnetococcaceae</taxon>
        <taxon>Magnetococcus</taxon>
    </lineage>
</organism>
<proteinExistence type="inferred from homology"/>
<accession>A0L7X0</accession>
<gene>
    <name evidence="1" type="primary">hldE</name>
    <name type="ordered locus">Mmc1_1554</name>
</gene>
<sequence>MLHAVETAFYQKHVLVVGDLMLDRYLWGDVTRISPEAPVPVVHMQRESHRCGGAANVASNLAKLGLHTSIVGFVGEDSDGQVLISALQESGIDTHGILPLAGWSTITKTRVIGGHQQILRMDRETPLADTAHASQLLHQQVMPMLEGEQRPHVIILSDYAKGVLSFELCQALIVRARNLGIPVLVDPKGRDYARYRHATALSPNRGELRGVTGVEDGDLNTLLDAGESLRQSLDVAFLAVTLSEQGIALVDGSEHPRRIPAMAQEVYDVSGAGDTVIATLGAGLAAGLTRLDALHLANLAAGVVVGKLGTAAIDLNELRGALLTDATYEQSDKIANWAHAKQQIARWHAQGEKVVFTNGCFDLLHAGHVTYLEHARRLGQRLVLGLNTDASVSRLKGPERPLIQEQDRARVLAALAAVDLVVLFEQDTPLELIEQLRPDILAKGADYREDQVVGGDLVRRWGGRVALVQLVQGRSTTGIVQRISAQK</sequence>
<evidence type="ECO:0000255" key="1">
    <source>
        <dbReference type="HAMAP-Rule" id="MF_01603"/>
    </source>
</evidence>
<evidence type="ECO:0000305" key="2"/>